<feature type="signal peptide" evidence="1">
    <location>
        <begin position="1"/>
        <end position="20"/>
    </location>
</feature>
<feature type="chain" id="PRO_5004159790" description="Nitrophorin Cim l NP" evidence="1">
    <location>
        <begin position="21"/>
        <end position="302"/>
    </location>
</feature>
<feature type="binding site" description="proximal binding residue" evidence="2 16 18">
    <location>
        <position position="80"/>
    </location>
    <ligand>
        <name>heme</name>
        <dbReference type="ChEBI" id="CHEBI:30413"/>
    </ligand>
    <ligandPart>
        <name>Fe</name>
        <dbReference type="ChEBI" id="CHEBI:18248"/>
    </ligandPart>
</feature>
<feature type="sequence conflict" description="In Ref. 1; AA sequence." evidence="10" ref="1">
    <original>V</original>
    <variation>N</variation>
    <location>
        <position position="139"/>
    </location>
</feature>
<feature type="strand" evidence="20">
    <location>
        <begin position="25"/>
        <end position="37"/>
    </location>
</feature>
<feature type="turn" evidence="20">
    <location>
        <begin position="46"/>
        <end position="50"/>
    </location>
</feature>
<feature type="strand" evidence="20">
    <location>
        <begin position="58"/>
        <end position="67"/>
    </location>
</feature>
<feature type="turn" evidence="20">
    <location>
        <begin position="69"/>
        <end position="71"/>
    </location>
</feature>
<feature type="helix" evidence="20">
    <location>
        <begin position="77"/>
        <end position="90"/>
    </location>
</feature>
<feature type="strand" evidence="20">
    <location>
        <begin position="93"/>
        <end position="100"/>
    </location>
</feature>
<feature type="strand" evidence="20">
    <location>
        <begin position="102"/>
        <end position="111"/>
    </location>
</feature>
<feature type="helix" evidence="20">
    <location>
        <begin position="112"/>
        <end position="114"/>
    </location>
</feature>
<feature type="turn" evidence="20">
    <location>
        <begin position="117"/>
        <end position="119"/>
    </location>
</feature>
<feature type="strand" evidence="20">
    <location>
        <begin position="123"/>
        <end position="128"/>
    </location>
</feature>
<feature type="strand" evidence="20">
    <location>
        <begin position="135"/>
        <end position="144"/>
    </location>
</feature>
<feature type="strand" evidence="20">
    <location>
        <begin position="147"/>
        <end position="155"/>
    </location>
</feature>
<feature type="strand" evidence="20">
    <location>
        <begin position="165"/>
        <end position="169"/>
    </location>
</feature>
<feature type="helix" evidence="20">
    <location>
        <begin position="172"/>
        <end position="174"/>
    </location>
</feature>
<feature type="strand" evidence="20">
    <location>
        <begin position="178"/>
        <end position="181"/>
    </location>
</feature>
<feature type="strand" evidence="20">
    <location>
        <begin position="184"/>
        <end position="191"/>
    </location>
</feature>
<feature type="helix" evidence="20">
    <location>
        <begin position="200"/>
        <end position="208"/>
    </location>
</feature>
<feature type="helix" evidence="20">
    <location>
        <begin position="212"/>
        <end position="216"/>
    </location>
</feature>
<feature type="helix" evidence="20">
    <location>
        <begin position="221"/>
        <end position="226"/>
    </location>
</feature>
<feature type="turn" evidence="19">
    <location>
        <begin position="227"/>
        <end position="232"/>
    </location>
</feature>
<feature type="strand" evidence="20">
    <location>
        <begin position="263"/>
        <end position="268"/>
    </location>
</feature>
<feature type="strand" evidence="20">
    <location>
        <begin position="270"/>
        <end position="272"/>
    </location>
</feature>
<feature type="strand" evidence="20">
    <location>
        <begin position="275"/>
        <end position="282"/>
    </location>
</feature>
<feature type="strand" evidence="20">
    <location>
        <begin position="288"/>
        <end position="291"/>
    </location>
</feature>
<feature type="strand" evidence="20">
    <location>
        <begin position="294"/>
        <end position="301"/>
    </location>
</feature>
<proteinExistence type="evidence at protein level"/>
<name>NP_CIMLE</name>
<dbReference type="EMBL" id="AF079803">
    <property type="protein sequence ID" value="AAC28738.1"/>
    <property type="molecule type" value="mRNA"/>
</dbReference>
<dbReference type="RefSeq" id="NP_001303633.1">
    <property type="nucleotide sequence ID" value="NM_001316704.1"/>
</dbReference>
<dbReference type="PDB" id="1NTF">
    <property type="method" value="X-ray"/>
    <property type="resolution" value="1.80 A"/>
    <property type="chains" value="A=21-302"/>
</dbReference>
<dbReference type="PDB" id="1SI6">
    <property type="method" value="X-ray"/>
    <property type="resolution" value="1.45 A"/>
    <property type="chains" value="X=21-302"/>
</dbReference>
<dbReference type="PDB" id="1Y21">
    <property type="method" value="X-ray"/>
    <property type="resolution" value="1.75 A"/>
    <property type="chains" value="A=21-302"/>
</dbReference>
<dbReference type="PDB" id="1YJH">
    <property type="method" value="X-ray"/>
    <property type="resolution" value="1.65 A"/>
    <property type="chains" value="A=21-302"/>
</dbReference>
<dbReference type="PDB" id="2IMQ">
    <property type="method" value="X-ray"/>
    <property type="resolution" value="1.30 A"/>
    <property type="chains" value="X=21-302"/>
</dbReference>
<dbReference type="PDB" id="4L1Y">
    <property type="method" value="X-ray"/>
    <property type="resolution" value="1.55 A"/>
    <property type="chains" value="A=23-302"/>
</dbReference>
<dbReference type="PDB" id="4L1Z">
    <property type="method" value="X-ray"/>
    <property type="resolution" value="1.65 A"/>
    <property type="chains" value="A=23-302"/>
</dbReference>
<dbReference type="PDB" id="4L20">
    <property type="method" value="X-ray"/>
    <property type="resolution" value="1.68 A"/>
    <property type="chains" value="A=23-302"/>
</dbReference>
<dbReference type="PDB" id="4L21">
    <property type="method" value="X-ray"/>
    <property type="resolution" value="1.65 A"/>
    <property type="chains" value="A=23-302"/>
</dbReference>
<dbReference type="PDBsum" id="1NTF"/>
<dbReference type="PDBsum" id="1SI6"/>
<dbReference type="PDBsum" id="1Y21"/>
<dbReference type="PDBsum" id="1YJH"/>
<dbReference type="PDBsum" id="2IMQ"/>
<dbReference type="PDBsum" id="4L1Y"/>
<dbReference type="PDBsum" id="4L1Z"/>
<dbReference type="PDBsum" id="4L20"/>
<dbReference type="PDBsum" id="4L21"/>
<dbReference type="SMR" id="O76745"/>
<dbReference type="Allergome" id="2915">
    <property type="allergen name" value="Cim l NP"/>
</dbReference>
<dbReference type="EnsemblMetazoa" id="NM_001316704.1">
    <property type="protein sequence ID" value="NP_001303633.1"/>
    <property type="gene ID" value="LOC106662976"/>
</dbReference>
<dbReference type="GeneID" id="106662976"/>
<dbReference type="KEGG" id="clec:106662976"/>
<dbReference type="VEuPathDB" id="VectorBase:LOC106662976"/>
<dbReference type="InParanoid" id="O76745"/>
<dbReference type="OrthoDB" id="62798at2759"/>
<dbReference type="EvolutionaryTrace" id="O76745"/>
<dbReference type="Proteomes" id="UP000494040">
    <property type="component" value="Unassembled WGS sequence"/>
</dbReference>
<dbReference type="GO" id="GO:0005615">
    <property type="term" value="C:extracellular space"/>
    <property type="evidence" value="ECO:0000314"/>
    <property type="project" value="UniProtKB"/>
</dbReference>
<dbReference type="GO" id="GO:0020037">
    <property type="term" value="F:heme binding"/>
    <property type="evidence" value="ECO:0000314"/>
    <property type="project" value="UniProtKB"/>
</dbReference>
<dbReference type="GO" id="GO:0005506">
    <property type="term" value="F:iron ion binding"/>
    <property type="evidence" value="ECO:0000314"/>
    <property type="project" value="UniProtKB"/>
</dbReference>
<dbReference type="GO" id="GO:0004439">
    <property type="term" value="F:phosphatidylinositol-4,5-bisphosphate 5-phosphatase activity"/>
    <property type="evidence" value="ECO:0007669"/>
    <property type="project" value="TreeGrafter"/>
</dbReference>
<dbReference type="GO" id="GO:0030185">
    <property type="term" value="P:nitric oxide transport"/>
    <property type="evidence" value="ECO:0000314"/>
    <property type="project" value="UniProtKB"/>
</dbReference>
<dbReference type="GO" id="GO:0046856">
    <property type="term" value="P:phosphatidylinositol dephosphorylation"/>
    <property type="evidence" value="ECO:0007669"/>
    <property type="project" value="InterPro"/>
</dbReference>
<dbReference type="GO" id="GO:0042311">
    <property type="term" value="P:vasodilation"/>
    <property type="evidence" value="ECO:0007669"/>
    <property type="project" value="UniProtKB-KW"/>
</dbReference>
<dbReference type="CDD" id="cd09074">
    <property type="entry name" value="INPP5c"/>
    <property type="match status" value="1"/>
</dbReference>
<dbReference type="Gene3D" id="3.60.10.10">
    <property type="entry name" value="Endonuclease/exonuclease/phosphatase"/>
    <property type="match status" value="1"/>
</dbReference>
<dbReference type="InterPro" id="IPR036691">
    <property type="entry name" value="Endo/exonu/phosph_ase_sf"/>
</dbReference>
<dbReference type="InterPro" id="IPR046985">
    <property type="entry name" value="IP5"/>
</dbReference>
<dbReference type="InterPro" id="IPR000300">
    <property type="entry name" value="IPPc"/>
</dbReference>
<dbReference type="PANTHER" id="PTHR11200">
    <property type="entry name" value="INOSITOL 5-PHOSPHATASE"/>
    <property type="match status" value="1"/>
</dbReference>
<dbReference type="Pfam" id="PF22669">
    <property type="entry name" value="Exo_endo_phos2"/>
    <property type="match status" value="1"/>
</dbReference>
<dbReference type="SMART" id="SM00128">
    <property type="entry name" value="IPPc"/>
    <property type="match status" value="1"/>
</dbReference>
<dbReference type="SUPFAM" id="SSF56219">
    <property type="entry name" value="DNase I-like"/>
    <property type="match status" value="1"/>
</dbReference>
<sequence>MKLLLSAGAALAFVLGLCAAGSPPAQLSVHTVSWNSGHERAPTNLEELLGLNSGETPDVIAVAVQGFGFQTDKPQQGPACVKNFQSLLTSKGYTKLKNTITETMGLTVYCLEKHLDQNTLKNETIIVTVDDQKKSGGIVTSFTIYNKRFSFTTSRMSDEDVTSTNTKYAYDTRLDYSKKDDPSDFLFWIGDLNVRVETNATHAKSLVDQNNIDGLMAFDQLKKAKEQKLFDGWTEPQVTFKPTYKFKPNTDEYDLSATPSWTDRALYKSGTGKTIQPLSYNSLTNYKQTEHRPVLAKFRVTL</sequence>
<organism evidence="15">
    <name type="scientific">Cimex lectularius</name>
    <name type="common">Bed bug</name>
    <name type="synonym">Acanthia lectularia</name>
    <dbReference type="NCBI Taxonomy" id="79782"/>
    <lineage>
        <taxon>Eukaryota</taxon>
        <taxon>Metazoa</taxon>
        <taxon>Ecdysozoa</taxon>
        <taxon>Arthropoda</taxon>
        <taxon>Hexapoda</taxon>
        <taxon>Insecta</taxon>
        <taxon>Pterygota</taxon>
        <taxon>Neoptera</taxon>
        <taxon>Paraneoptera</taxon>
        <taxon>Hemiptera</taxon>
        <taxon>Heteroptera</taxon>
        <taxon>Panheteroptera</taxon>
        <taxon>Cimicomorpha</taxon>
        <taxon>Cimicidae</taxon>
        <taxon>Cimex</taxon>
    </lineage>
</organism>
<comment type="function">
    <text evidence="2 10">Heme-based protein that delivers nitric oxide gas (NO) to the victim while feeding, resulting in vasodilation (Probable). In place of heme, the heme-binding cysteine can also reversibly bind NO when it is present in high concentrations (PubMed:15637157).</text>
</comment>
<comment type="cofactor">
    <cofactor evidence="2 14">
        <name>heme b</name>
        <dbReference type="ChEBI" id="CHEBI:60344"/>
    </cofactor>
    <text evidence="11">Binds 1 heme b (iron(II)-protoporphyrin IX) group per subunit.</text>
</comment>
<comment type="subcellular location">
    <subcellularLocation>
        <location evidence="12 13 14">Secreted</location>
    </subcellularLocation>
</comment>
<comment type="tissue specificity">
    <text evidence="3 5">Expressed in salivary glands.</text>
</comment>
<comment type="PTM">
    <text evidence="5">The N-terminus is blocked.</text>
</comment>
<comment type="allergen">
    <text evidence="3 4">Causes an allergic reaction in human. Binds to IgE of patients allergic to bed bugs (PubMed:16417223, PubMed:22305681). Binds to IgE in 30% of the 30 adult New York City (NYC) residents tested who had been bitten by the bed bug and had a visible response to it (an itchy raised bump) (PubMed:22305681).</text>
</comment>
<comment type="miscellaneous">
    <text evidence="5">Has some sequence similarity to inositol phosphatases, but no inositol trisphosphate phosphatase activity is detected.</text>
</comment>
<evidence type="ECO:0000255" key="1"/>
<evidence type="ECO:0000269" key="2">
    <source>
    </source>
</evidence>
<evidence type="ECO:0000269" key="3">
    <source>
    </source>
</evidence>
<evidence type="ECO:0000269" key="4">
    <source>
    </source>
</evidence>
<evidence type="ECO:0000269" key="5">
    <source>
    </source>
</evidence>
<evidence type="ECO:0000303" key="6">
    <source>
    </source>
</evidence>
<evidence type="ECO:0000303" key="7">
    <source>
    </source>
</evidence>
<evidence type="ECO:0000303" key="8">
    <source>
    </source>
</evidence>
<evidence type="ECO:0000303" key="9">
    <source>
    </source>
</evidence>
<evidence type="ECO:0000305" key="10"/>
<evidence type="ECO:0000305" key="11">
    <source>
    </source>
</evidence>
<evidence type="ECO:0000305" key="12">
    <source>
    </source>
</evidence>
<evidence type="ECO:0000305" key="13">
    <source>
    </source>
</evidence>
<evidence type="ECO:0000305" key="14">
    <source>
    </source>
</evidence>
<evidence type="ECO:0000312" key="15">
    <source>
        <dbReference type="EMBL" id="AAC28738.1"/>
    </source>
</evidence>
<evidence type="ECO:0007744" key="16">
    <source>
        <dbReference type="PDB" id="1NTF"/>
    </source>
</evidence>
<evidence type="ECO:0007744" key="17">
    <source>
        <dbReference type="PDB" id="1Y21"/>
    </source>
</evidence>
<evidence type="ECO:0007744" key="18">
    <source>
        <dbReference type="PDB" id="2IMQ"/>
    </source>
</evidence>
<evidence type="ECO:0007829" key="19">
    <source>
        <dbReference type="PDB" id="1NTF"/>
    </source>
</evidence>
<evidence type="ECO:0007829" key="20">
    <source>
        <dbReference type="PDB" id="2IMQ"/>
    </source>
</evidence>
<protein>
    <recommendedName>
        <fullName evidence="10">Nitrophorin Cim l NP</fullName>
        <shortName evidence="10">NP</shortName>
    </recommendedName>
    <alternativeName>
        <fullName evidence="7 9">Salivary nitrophorin</fullName>
    </alternativeName>
    <alternativeName>
        <fullName evidence="6 8">cNP</fullName>
    </alternativeName>
    <allergenName evidence="10">Cim l NP</allergenName>
</protein>
<accession>O76745</accession>
<keyword id="KW-0002">3D-structure</keyword>
<keyword id="KW-0020">Allergen</keyword>
<keyword id="KW-0903">Direct protein sequencing</keyword>
<keyword id="KW-0349">Heme</keyword>
<keyword id="KW-0408">Iron</keyword>
<keyword id="KW-0479">Metal-binding</keyword>
<keyword id="KW-1185">Reference proteome</keyword>
<keyword id="KW-0964">Secreted</keyword>
<keyword id="KW-0732">Signal</keyword>
<keyword id="KW-0813">Transport</keyword>
<keyword id="KW-0838">Vasoactive</keyword>
<keyword id="KW-0840">Vasodilator</keyword>
<reference evidence="15" key="1">
    <citation type="journal article" date="1998" name="J. Exp. Biol.">
        <title>Purification and cloning of the salivary nitrophorin from the hemipteran Cimex lectularius.</title>
        <authorList>
            <person name="Valenzuela J.G."/>
            <person name="Ribeiro J.M.C."/>
        </authorList>
    </citation>
    <scope>NUCLEOTIDE SEQUENCE [MRNA]</scope>
    <scope>PROTEIN SEQUENCE OF 139-147; 179-195; 229-245 AND 275-286</scope>
    <scope>IDENTIFICATION BY MASS SPECTROMETRY</scope>
    <scope>COFACTOR</scope>
    <scope>TISSUE SPECIFICITY</scope>
    <scope>PTM</scope>
    <source>
        <tissue evidence="9">Salivary gland</tissue>
    </source>
</reference>
<reference key="2">
    <citation type="journal article" date="2006" name="J. Invest. Dermatol.">
        <title>Bullous allergic hypersensitivity to bed bug bites mediated by IgE against salivary nitrophorin.</title>
        <authorList>
            <person name="Leverkus M."/>
            <person name="Jochim R.C."/>
            <person name="Schaed S."/>
            <person name="Broecker E.B."/>
            <person name="Andersen J.F."/>
            <person name="Valenzuela J.G."/>
            <person name="Trautmann A."/>
        </authorList>
    </citation>
    <scope>TISSUE SPECIFICITY</scope>
    <scope>ALLERGEN</scope>
</reference>
<reference key="3">
    <citation type="journal article" date="2012" name="J. Allergy Clin. Immunol.">
        <title>IgE against bed bug (Cimex lectularius) allergens is common among adults bitten by bed bugs.</title>
        <authorList>
            <person name="Price J.B."/>
            <person name="Divjan A."/>
            <person name="Montfort W.R."/>
            <person name="Stansfield K.H."/>
            <person name="Freyer G.A."/>
            <person name="Perzanowski M.S."/>
        </authorList>
    </citation>
    <scope>ALLERGEN</scope>
</reference>
<reference evidence="16 17" key="4">
    <citation type="journal article" date="2005" name="Proc. Natl. Acad. Sci. U.S.A.">
        <title>Heme-assisted S-nitrosation of a proximal thiolate in a nitric oxide transport protein.</title>
        <authorList>
            <person name="Weichsel A."/>
            <person name="Maes E.M."/>
            <person name="Andersen J.F."/>
            <person name="Valenzuela J.G."/>
            <person name="Shokhireva T.K."/>
            <person name="Walker F.A."/>
            <person name="Montfort W.R."/>
        </authorList>
    </citation>
    <scope>X-RAY CRYSTALLOGRAPHY (1.75 ANGSTROMS) OF 21-302 IN COMPLEX WITH HEME AND NITRIC OXIDE</scope>
    <scope>COFACTOR</scope>
    <scope>REACTION MECHANISM</scope>
    <scope>EPR SPECTROSCOPY</scope>
</reference>
<reference evidence="18" key="5">
    <citation type="submission" date="2013-06" db="PDB data bank">
        <title>Crystal Structure of Cimex Nitrophorin.</title>
        <authorList>
            <person name="Weichsel A."/>
            <person name="Badgandi H."/>
            <person name="Montfort W.R."/>
        </authorList>
    </citation>
    <scope>X-RAY CRYSTALLOGRAPHY (1.30 ANGSTROMS) OF 21-302 IN COMPLEX WITH HEME</scope>
</reference>